<name>TRHO_CORU7</name>
<accession>B1VHR9</accession>
<feature type="chain" id="PRO_1000200350" description="tRNA uridine(34) hydroxylase">
    <location>
        <begin position="1"/>
        <end position="297"/>
    </location>
</feature>
<feature type="domain" description="Rhodanese" evidence="1">
    <location>
        <begin position="137"/>
        <end position="232"/>
    </location>
</feature>
<feature type="active site" description="Cysteine persulfide intermediate" evidence="1">
    <location>
        <position position="192"/>
    </location>
</feature>
<reference key="1">
    <citation type="journal article" date="2008" name="J. Biotechnol.">
        <title>The lifestyle of Corynebacterium urealyticum derived from its complete genome sequence established by pyrosequencing.</title>
        <authorList>
            <person name="Tauch A."/>
            <person name="Trost E."/>
            <person name="Tilker A."/>
            <person name="Ludewig U."/>
            <person name="Schneiker S."/>
            <person name="Goesmann A."/>
            <person name="Arnold W."/>
            <person name="Bekel T."/>
            <person name="Brinkrolf K."/>
            <person name="Brune I."/>
            <person name="Goetker S."/>
            <person name="Kalinowski J."/>
            <person name="Kamp P.-B."/>
            <person name="Lobo F.P."/>
            <person name="Viehoever P."/>
            <person name="Weisshaar B."/>
            <person name="Soriano F."/>
            <person name="Droege M."/>
            <person name="Puehler A."/>
        </authorList>
    </citation>
    <scope>NUCLEOTIDE SEQUENCE [LARGE SCALE GENOMIC DNA]</scope>
    <source>
        <strain>ATCC 43042 / DSM 7109</strain>
    </source>
</reference>
<proteinExistence type="inferred from homology"/>
<protein>
    <recommendedName>
        <fullName evidence="1">tRNA uridine(34) hydroxylase</fullName>
        <ecNumber evidence="1">1.14.-.-</ecNumber>
    </recommendedName>
    <alternativeName>
        <fullName evidence="1">tRNA hydroxylation protein O</fullName>
    </alternativeName>
</protein>
<sequence length="297" mass="33127">MAVSATDLKESRILLYYCFTPIADPTAIMLWQKQLCESLGLTGRILISEHGINGTVGGSLHACKQYARRTREYPGFKGMEFKWSQGGAEDFPRLSVKVRDEIVSFGAPGELKVDENGVIGGGTHLKPEEVNKLVEERGDDVVFFDGRNAMEAEIGRFKNAVVPDVETTHDFIKELESGKYDWMKDKPVVSYCTGGIRCEVLSALMKNRGFEEVYQIDGGIVRYGEKYGDKGLWEGSLYVFDKRMHMEFSEEAKQLGFCKNCGAATNTFHNCENSECREQILLCEDCAADPAVTCGEC</sequence>
<evidence type="ECO:0000255" key="1">
    <source>
        <dbReference type="HAMAP-Rule" id="MF_00469"/>
    </source>
</evidence>
<gene>
    <name evidence="1" type="primary">trhO</name>
    <name type="ordered locus">cu1760</name>
</gene>
<comment type="function">
    <text evidence="1">Catalyzes oxygen-dependent 5-hydroxyuridine (ho5U) modification at position 34 in tRNAs.</text>
</comment>
<comment type="catalytic activity">
    <reaction evidence="1">
        <text>uridine(34) in tRNA + AH2 + O2 = 5-hydroxyuridine(34) in tRNA + A + H2O</text>
        <dbReference type="Rhea" id="RHEA:64224"/>
        <dbReference type="Rhea" id="RHEA-COMP:11727"/>
        <dbReference type="Rhea" id="RHEA-COMP:13381"/>
        <dbReference type="ChEBI" id="CHEBI:13193"/>
        <dbReference type="ChEBI" id="CHEBI:15377"/>
        <dbReference type="ChEBI" id="CHEBI:15379"/>
        <dbReference type="ChEBI" id="CHEBI:17499"/>
        <dbReference type="ChEBI" id="CHEBI:65315"/>
        <dbReference type="ChEBI" id="CHEBI:136877"/>
    </reaction>
</comment>
<comment type="similarity">
    <text evidence="1">Belongs to the TrhO family.</text>
</comment>
<organism>
    <name type="scientific">Corynebacterium urealyticum (strain ATCC 43042 / DSM 7109)</name>
    <dbReference type="NCBI Taxonomy" id="504474"/>
    <lineage>
        <taxon>Bacteria</taxon>
        <taxon>Bacillati</taxon>
        <taxon>Actinomycetota</taxon>
        <taxon>Actinomycetes</taxon>
        <taxon>Mycobacteriales</taxon>
        <taxon>Corynebacteriaceae</taxon>
        <taxon>Corynebacterium</taxon>
    </lineage>
</organism>
<keyword id="KW-0560">Oxidoreductase</keyword>
<keyword id="KW-1185">Reference proteome</keyword>
<keyword id="KW-0819">tRNA processing</keyword>
<dbReference type="EC" id="1.14.-.-" evidence="1"/>
<dbReference type="EMBL" id="AM942444">
    <property type="protein sequence ID" value="CAQ05719.1"/>
    <property type="molecule type" value="Genomic_DNA"/>
</dbReference>
<dbReference type="RefSeq" id="WP_012360995.1">
    <property type="nucleotide sequence ID" value="NC_010545.1"/>
</dbReference>
<dbReference type="SMR" id="B1VHR9"/>
<dbReference type="STRING" id="504474.cu1760"/>
<dbReference type="GeneID" id="60604543"/>
<dbReference type="KEGG" id="cur:cu1760"/>
<dbReference type="eggNOG" id="COG1054">
    <property type="taxonomic scope" value="Bacteria"/>
</dbReference>
<dbReference type="HOGENOM" id="CLU_038878_1_0_11"/>
<dbReference type="Proteomes" id="UP000001727">
    <property type="component" value="Chromosome"/>
</dbReference>
<dbReference type="GO" id="GO:0016705">
    <property type="term" value="F:oxidoreductase activity, acting on paired donors, with incorporation or reduction of molecular oxygen"/>
    <property type="evidence" value="ECO:0007669"/>
    <property type="project" value="UniProtKB-UniRule"/>
</dbReference>
<dbReference type="GO" id="GO:0006400">
    <property type="term" value="P:tRNA modification"/>
    <property type="evidence" value="ECO:0007669"/>
    <property type="project" value="UniProtKB-UniRule"/>
</dbReference>
<dbReference type="CDD" id="cd01518">
    <property type="entry name" value="RHOD_YceA"/>
    <property type="match status" value="1"/>
</dbReference>
<dbReference type="Gene3D" id="3.30.70.100">
    <property type="match status" value="1"/>
</dbReference>
<dbReference type="Gene3D" id="3.40.250.10">
    <property type="entry name" value="Rhodanese-like domain"/>
    <property type="match status" value="1"/>
</dbReference>
<dbReference type="HAMAP" id="MF_00469">
    <property type="entry name" value="TrhO"/>
    <property type="match status" value="1"/>
</dbReference>
<dbReference type="InterPro" id="IPR001763">
    <property type="entry name" value="Rhodanese-like_dom"/>
</dbReference>
<dbReference type="InterPro" id="IPR036873">
    <property type="entry name" value="Rhodanese-like_dom_sf"/>
</dbReference>
<dbReference type="InterPro" id="IPR022111">
    <property type="entry name" value="Rhodanese_C"/>
</dbReference>
<dbReference type="InterPro" id="IPR020936">
    <property type="entry name" value="TrhO"/>
</dbReference>
<dbReference type="InterPro" id="IPR040503">
    <property type="entry name" value="TRHO_N"/>
</dbReference>
<dbReference type="NCBIfam" id="NF001134">
    <property type="entry name" value="PRK00142.1-2"/>
    <property type="match status" value="1"/>
</dbReference>
<dbReference type="PANTHER" id="PTHR43268">
    <property type="entry name" value="THIOSULFATE SULFURTRANSFERASE/RHODANESE-LIKE DOMAIN-CONTAINING PROTEIN 2"/>
    <property type="match status" value="1"/>
</dbReference>
<dbReference type="PANTHER" id="PTHR43268:SF6">
    <property type="entry name" value="THIOSULFATE SULFURTRANSFERASE_RHODANESE-LIKE DOMAIN-CONTAINING PROTEIN 2"/>
    <property type="match status" value="1"/>
</dbReference>
<dbReference type="Pfam" id="PF00581">
    <property type="entry name" value="Rhodanese"/>
    <property type="match status" value="1"/>
</dbReference>
<dbReference type="Pfam" id="PF12368">
    <property type="entry name" value="Rhodanese_C"/>
    <property type="match status" value="1"/>
</dbReference>
<dbReference type="Pfam" id="PF17773">
    <property type="entry name" value="UPF0176_N"/>
    <property type="match status" value="1"/>
</dbReference>
<dbReference type="SMART" id="SM00450">
    <property type="entry name" value="RHOD"/>
    <property type="match status" value="1"/>
</dbReference>
<dbReference type="SUPFAM" id="SSF52821">
    <property type="entry name" value="Rhodanese/Cell cycle control phosphatase"/>
    <property type="match status" value="1"/>
</dbReference>
<dbReference type="PROSITE" id="PS50206">
    <property type="entry name" value="RHODANESE_3"/>
    <property type="match status" value="1"/>
</dbReference>